<name>RECR_MYCA1</name>
<protein>
    <recommendedName>
        <fullName evidence="1">Recombination protein RecR</fullName>
    </recommendedName>
</protein>
<accession>A0Q9T5</accession>
<feature type="chain" id="PRO_0000322910" description="Recombination protein RecR">
    <location>
        <begin position="1"/>
        <end position="203"/>
    </location>
</feature>
<feature type="domain" description="Toprim" evidence="1">
    <location>
        <begin position="79"/>
        <end position="179"/>
    </location>
</feature>
<feature type="zinc finger region" description="C4-type" evidence="1">
    <location>
        <begin position="56"/>
        <end position="71"/>
    </location>
</feature>
<gene>
    <name evidence="1" type="primary">recR</name>
    <name type="ordered locus">MAV_0388</name>
</gene>
<keyword id="KW-0227">DNA damage</keyword>
<keyword id="KW-0233">DNA recombination</keyword>
<keyword id="KW-0234">DNA repair</keyword>
<keyword id="KW-0479">Metal-binding</keyword>
<keyword id="KW-0862">Zinc</keyword>
<keyword id="KW-0863">Zinc-finger</keyword>
<sequence>MFEGPVQDLIDELGKLPGIGPKSAQRIAFHLLSVEPPDIDRLTAVLARVRDGVRFCAVCGNVSDDERCRICSDPRRDASVVCVVEEPKDVQAVERTREFRGRYHVLGGALDPLSGVGPDQLRIRELLSRIGERVDDVDITEVIIATDPNTEGEATATYLVRMLRDIPGLTVTRIASGLPMGGDLEFADELTLGRALAGRRAMV</sequence>
<evidence type="ECO:0000255" key="1">
    <source>
        <dbReference type="HAMAP-Rule" id="MF_00017"/>
    </source>
</evidence>
<comment type="function">
    <text evidence="1">May play a role in DNA repair. It seems to be involved in an RecBC-independent recombinational process of DNA repair. It may act with RecF and RecO.</text>
</comment>
<comment type="similarity">
    <text evidence="1">Belongs to the RecR family.</text>
</comment>
<dbReference type="EMBL" id="CP000479">
    <property type="protein sequence ID" value="ABK65269.1"/>
    <property type="molecule type" value="Genomic_DNA"/>
</dbReference>
<dbReference type="RefSeq" id="WP_003873365.1">
    <property type="nucleotide sequence ID" value="NC_008595.1"/>
</dbReference>
<dbReference type="SMR" id="A0Q9T5"/>
<dbReference type="GeneID" id="75268280"/>
<dbReference type="KEGG" id="mav:MAV_0388"/>
<dbReference type="HOGENOM" id="CLU_060739_1_0_11"/>
<dbReference type="Proteomes" id="UP000001574">
    <property type="component" value="Chromosome"/>
</dbReference>
<dbReference type="GO" id="GO:0003677">
    <property type="term" value="F:DNA binding"/>
    <property type="evidence" value="ECO:0007669"/>
    <property type="project" value="UniProtKB-UniRule"/>
</dbReference>
<dbReference type="GO" id="GO:0008270">
    <property type="term" value="F:zinc ion binding"/>
    <property type="evidence" value="ECO:0007669"/>
    <property type="project" value="UniProtKB-KW"/>
</dbReference>
<dbReference type="GO" id="GO:0006310">
    <property type="term" value="P:DNA recombination"/>
    <property type="evidence" value="ECO:0007669"/>
    <property type="project" value="UniProtKB-UniRule"/>
</dbReference>
<dbReference type="GO" id="GO:0006281">
    <property type="term" value="P:DNA repair"/>
    <property type="evidence" value="ECO:0007669"/>
    <property type="project" value="UniProtKB-UniRule"/>
</dbReference>
<dbReference type="CDD" id="cd01025">
    <property type="entry name" value="TOPRIM_recR"/>
    <property type="match status" value="1"/>
</dbReference>
<dbReference type="Gene3D" id="3.30.60.80">
    <property type="match status" value="1"/>
</dbReference>
<dbReference type="Gene3D" id="3.40.1360.10">
    <property type="match status" value="1"/>
</dbReference>
<dbReference type="Gene3D" id="6.10.250.240">
    <property type="match status" value="1"/>
</dbReference>
<dbReference type="Gene3D" id="1.10.8.420">
    <property type="entry name" value="RecR Domain 1"/>
    <property type="match status" value="1"/>
</dbReference>
<dbReference type="HAMAP" id="MF_00017">
    <property type="entry name" value="RecR"/>
    <property type="match status" value="1"/>
</dbReference>
<dbReference type="InterPro" id="IPR000093">
    <property type="entry name" value="DNA_Rcmb_RecR"/>
</dbReference>
<dbReference type="InterPro" id="IPR003583">
    <property type="entry name" value="Hlx-hairpin-Hlx_DNA-bd_motif"/>
</dbReference>
<dbReference type="InterPro" id="IPR023627">
    <property type="entry name" value="Rcmb_RecR"/>
</dbReference>
<dbReference type="InterPro" id="IPR015967">
    <property type="entry name" value="Rcmb_RecR_Znf"/>
</dbReference>
<dbReference type="InterPro" id="IPR006171">
    <property type="entry name" value="TOPRIM_dom"/>
</dbReference>
<dbReference type="InterPro" id="IPR034137">
    <property type="entry name" value="TOPRIM_RecR"/>
</dbReference>
<dbReference type="NCBIfam" id="TIGR00615">
    <property type="entry name" value="recR"/>
    <property type="match status" value="1"/>
</dbReference>
<dbReference type="PANTHER" id="PTHR30446">
    <property type="entry name" value="RECOMBINATION PROTEIN RECR"/>
    <property type="match status" value="1"/>
</dbReference>
<dbReference type="PANTHER" id="PTHR30446:SF0">
    <property type="entry name" value="RECOMBINATION PROTEIN RECR"/>
    <property type="match status" value="1"/>
</dbReference>
<dbReference type="Pfam" id="PF21175">
    <property type="entry name" value="RecR_C"/>
    <property type="match status" value="1"/>
</dbReference>
<dbReference type="Pfam" id="PF21176">
    <property type="entry name" value="RecR_HhH"/>
    <property type="match status" value="1"/>
</dbReference>
<dbReference type="Pfam" id="PF02132">
    <property type="entry name" value="RecR_ZnF"/>
    <property type="match status" value="1"/>
</dbReference>
<dbReference type="Pfam" id="PF13662">
    <property type="entry name" value="Toprim_4"/>
    <property type="match status" value="1"/>
</dbReference>
<dbReference type="SMART" id="SM00278">
    <property type="entry name" value="HhH1"/>
    <property type="match status" value="1"/>
</dbReference>
<dbReference type="SMART" id="SM00493">
    <property type="entry name" value="TOPRIM"/>
    <property type="match status" value="1"/>
</dbReference>
<dbReference type="SUPFAM" id="SSF111304">
    <property type="entry name" value="Recombination protein RecR"/>
    <property type="match status" value="1"/>
</dbReference>
<dbReference type="PROSITE" id="PS01300">
    <property type="entry name" value="RECR"/>
    <property type="match status" value="1"/>
</dbReference>
<dbReference type="PROSITE" id="PS50880">
    <property type="entry name" value="TOPRIM"/>
    <property type="match status" value="1"/>
</dbReference>
<organism>
    <name type="scientific">Mycobacterium avium (strain 104)</name>
    <dbReference type="NCBI Taxonomy" id="243243"/>
    <lineage>
        <taxon>Bacteria</taxon>
        <taxon>Bacillati</taxon>
        <taxon>Actinomycetota</taxon>
        <taxon>Actinomycetes</taxon>
        <taxon>Mycobacteriales</taxon>
        <taxon>Mycobacteriaceae</taxon>
        <taxon>Mycobacterium</taxon>
        <taxon>Mycobacterium avium complex (MAC)</taxon>
    </lineage>
</organism>
<reference key="1">
    <citation type="submission" date="2006-10" db="EMBL/GenBank/DDBJ databases">
        <authorList>
            <person name="Fleischmann R.D."/>
            <person name="Dodson R.J."/>
            <person name="Haft D.H."/>
            <person name="Merkel J.S."/>
            <person name="Nelson W.C."/>
            <person name="Fraser C.M."/>
        </authorList>
    </citation>
    <scope>NUCLEOTIDE SEQUENCE [LARGE SCALE GENOMIC DNA]</scope>
    <source>
        <strain>104</strain>
    </source>
</reference>
<proteinExistence type="inferred from homology"/>